<feature type="chain" id="PRO_1000095871" description="Indole-3-glycerol phosphate synthase">
    <location>
        <begin position="1"/>
        <end position="272"/>
    </location>
</feature>
<organism>
    <name type="scientific">Mycobacteroides abscessus (strain ATCC 19977 / DSM 44196 / CCUG 20993 / CIP 104536 / JCM 13569 / NCTC 13031 / TMC 1543 / L948)</name>
    <name type="common">Mycobacterium abscessus</name>
    <dbReference type="NCBI Taxonomy" id="561007"/>
    <lineage>
        <taxon>Bacteria</taxon>
        <taxon>Bacillati</taxon>
        <taxon>Actinomycetota</taxon>
        <taxon>Actinomycetes</taxon>
        <taxon>Mycobacteriales</taxon>
        <taxon>Mycobacteriaceae</taxon>
        <taxon>Mycobacteroides</taxon>
        <taxon>Mycobacteroides abscessus</taxon>
    </lineage>
</organism>
<protein>
    <recommendedName>
        <fullName evidence="1">Indole-3-glycerol phosphate synthase</fullName>
        <shortName evidence="1">IGPS</shortName>
        <ecNumber evidence="1">4.1.1.48</ecNumber>
    </recommendedName>
</protein>
<keyword id="KW-0028">Amino-acid biosynthesis</keyword>
<keyword id="KW-0057">Aromatic amino acid biosynthesis</keyword>
<keyword id="KW-0210">Decarboxylase</keyword>
<keyword id="KW-0456">Lyase</keyword>
<keyword id="KW-1185">Reference proteome</keyword>
<keyword id="KW-0822">Tryptophan biosynthesis</keyword>
<gene>
    <name evidence="1" type="primary">trpC</name>
    <name type="ordered locus">MAB_2645c</name>
</gene>
<reference key="1">
    <citation type="journal article" date="2009" name="PLoS ONE">
        <title>Non mycobacterial virulence genes in the genome of the emerging pathogen Mycobacterium abscessus.</title>
        <authorList>
            <person name="Ripoll F."/>
            <person name="Pasek S."/>
            <person name="Schenowitz C."/>
            <person name="Dossat C."/>
            <person name="Barbe V."/>
            <person name="Rottman M."/>
            <person name="Macheras E."/>
            <person name="Heym B."/>
            <person name="Herrmann J.L."/>
            <person name="Daffe M."/>
            <person name="Brosch R."/>
            <person name="Risler J.L."/>
            <person name="Gaillard J.L."/>
        </authorList>
    </citation>
    <scope>NUCLEOTIDE SEQUENCE [LARGE SCALE GENOMIC DNA]</scope>
    <source>
        <strain>ATCC 19977 / DSM 44196 / CCUG 20993 / CIP 104536 / JCM 13569 / NCTC 13031 / TMC 1543 / L948</strain>
    </source>
</reference>
<proteinExistence type="inferred from homology"/>
<accession>B1MBV4</accession>
<comment type="catalytic activity">
    <reaction evidence="1">
        <text>1-(2-carboxyphenylamino)-1-deoxy-D-ribulose 5-phosphate + H(+) = (1S,2R)-1-C-(indol-3-yl)glycerol 3-phosphate + CO2 + H2O</text>
        <dbReference type="Rhea" id="RHEA:23476"/>
        <dbReference type="ChEBI" id="CHEBI:15377"/>
        <dbReference type="ChEBI" id="CHEBI:15378"/>
        <dbReference type="ChEBI" id="CHEBI:16526"/>
        <dbReference type="ChEBI" id="CHEBI:58613"/>
        <dbReference type="ChEBI" id="CHEBI:58866"/>
        <dbReference type="EC" id="4.1.1.48"/>
    </reaction>
</comment>
<comment type="pathway">
    <text evidence="1">Amino-acid biosynthesis; L-tryptophan biosynthesis; L-tryptophan from chorismate: step 4/5.</text>
</comment>
<comment type="similarity">
    <text evidence="1">Belongs to the TrpC family.</text>
</comment>
<name>TRPC_MYCA9</name>
<evidence type="ECO:0000255" key="1">
    <source>
        <dbReference type="HAMAP-Rule" id="MF_00134"/>
    </source>
</evidence>
<sequence length="272" mass="27968">MSSGTVLDSILDGVRADVAAREAVVDLATVKAAAKAAPKPLDVMAALREPGIAVIAEVKRASPSRGALAEISDPAELAKAYEDGGARIISVLTEGRRFNGSLDDLDSVRAAVSVPVLRKDFVISPYQIHEARAHGADLILLIVAALEQTALVSLLDRTESLGMTALVEVHTEEEADRALSAGASVIGVNARDLKTLEIDRDCFSRIAPGLPSGVIRIAESGVRGTADLLAYAGAGADAVLVGEGLVTSGDPRGAVADLVTAGTHPSCPKPAR</sequence>
<dbReference type="EC" id="4.1.1.48" evidence="1"/>
<dbReference type="EMBL" id="CU458896">
    <property type="protein sequence ID" value="CAM62725.1"/>
    <property type="molecule type" value="Genomic_DNA"/>
</dbReference>
<dbReference type="RefSeq" id="WP_005057938.1">
    <property type="nucleotide sequence ID" value="NZ_MLCG01000003.1"/>
</dbReference>
<dbReference type="SMR" id="B1MBV4"/>
<dbReference type="GeneID" id="93379576"/>
<dbReference type="KEGG" id="mab:MAB_2645c"/>
<dbReference type="UniPathway" id="UPA00035">
    <property type="reaction ID" value="UER00043"/>
</dbReference>
<dbReference type="Proteomes" id="UP000007137">
    <property type="component" value="Chromosome"/>
</dbReference>
<dbReference type="GO" id="GO:0004425">
    <property type="term" value="F:indole-3-glycerol-phosphate synthase activity"/>
    <property type="evidence" value="ECO:0007669"/>
    <property type="project" value="UniProtKB-UniRule"/>
</dbReference>
<dbReference type="GO" id="GO:0004640">
    <property type="term" value="F:phosphoribosylanthranilate isomerase activity"/>
    <property type="evidence" value="ECO:0007669"/>
    <property type="project" value="TreeGrafter"/>
</dbReference>
<dbReference type="GO" id="GO:0000162">
    <property type="term" value="P:L-tryptophan biosynthetic process"/>
    <property type="evidence" value="ECO:0007669"/>
    <property type="project" value="UniProtKB-UniRule"/>
</dbReference>
<dbReference type="CDD" id="cd00331">
    <property type="entry name" value="IGPS"/>
    <property type="match status" value="1"/>
</dbReference>
<dbReference type="FunFam" id="3.20.20.70:FF:000024">
    <property type="entry name" value="Indole-3-glycerol phosphate synthase"/>
    <property type="match status" value="1"/>
</dbReference>
<dbReference type="Gene3D" id="3.20.20.70">
    <property type="entry name" value="Aldolase class I"/>
    <property type="match status" value="1"/>
</dbReference>
<dbReference type="HAMAP" id="MF_00134_A">
    <property type="entry name" value="IGPS_A"/>
    <property type="match status" value="1"/>
</dbReference>
<dbReference type="HAMAP" id="MF_00134_B">
    <property type="entry name" value="IGPS_B"/>
    <property type="match status" value="1"/>
</dbReference>
<dbReference type="InterPro" id="IPR013785">
    <property type="entry name" value="Aldolase_TIM"/>
</dbReference>
<dbReference type="InterPro" id="IPR045186">
    <property type="entry name" value="Indole-3-glycerol_P_synth"/>
</dbReference>
<dbReference type="InterPro" id="IPR013798">
    <property type="entry name" value="Indole-3-glycerol_P_synth_dom"/>
</dbReference>
<dbReference type="InterPro" id="IPR001468">
    <property type="entry name" value="Indole-3-GlycerolPSynthase_CS"/>
</dbReference>
<dbReference type="InterPro" id="IPR011060">
    <property type="entry name" value="RibuloseP-bd_barrel"/>
</dbReference>
<dbReference type="NCBIfam" id="NF001369">
    <property type="entry name" value="PRK00278.1-1"/>
    <property type="match status" value="1"/>
</dbReference>
<dbReference type="NCBIfam" id="NF001377">
    <property type="entry name" value="PRK00278.2-4"/>
    <property type="match status" value="1"/>
</dbReference>
<dbReference type="PANTHER" id="PTHR22854:SF2">
    <property type="entry name" value="INDOLE-3-GLYCEROL-PHOSPHATE SYNTHASE"/>
    <property type="match status" value="1"/>
</dbReference>
<dbReference type="PANTHER" id="PTHR22854">
    <property type="entry name" value="TRYPTOPHAN BIOSYNTHESIS PROTEIN"/>
    <property type="match status" value="1"/>
</dbReference>
<dbReference type="Pfam" id="PF00218">
    <property type="entry name" value="IGPS"/>
    <property type="match status" value="1"/>
</dbReference>
<dbReference type="SUPFAM" id="SSF51366">
    <property type="entry name" value="Ribulose-phoshate binding barrel"/>
    <property type="match status" value="1"/>
</dbReference>
<dbReference type="PROSITE" id="PS00614">
    <property type="entry name" value="IGPS"/>
    <property type="match status" value="1"/>
</dbReference>